<dbReference type="EC" id="6.1.1.5" evidence="1"/>
<dbReference type="EMBL" id="CP000462">
    <property type="protein sequence ID" value="ABK37838.1"/>
    <property type="molecule type" value="Genomic_DNA"/>
</dbReference>
<dbReference type="RefSeq" id="WP_011704643.1">
    <property type="nucleotide sequence ID" value="NC_008570.1"/>
</dbReference>
<dbReference type="RefSeq" id="YP_855224.1">
    <property type="nucleotide sequence ID" value="NC_008570.1"/>
</dbReference>
<dbReference type="SMR" id="A0KG39"/>
<dbReference type="STRING" id="380703.AHA_0682"/>
<dbReference type="EnsemblBacteria" id="ABK37838">
    <property type="protein sequence ID" value="ABK37838"/>
    <property type="gene ID" value="AHA_0682"/>
</dbReference>
<dbReference type="GeneID" id="4487674"/>
<dbReference type="KEGG" id="aha:AHA_0682"/>
<dbReference type="PATRIC" id="fig|380703.7.peg.684"/>
<dbReference type="eggNOG" id="COG0060">
    <property type="taxonomic scope" value="Bacteria"/>
</dbReference>
<dbReference type="HOGENOM" id="CLU_001493_7_1_6"/>
<dbReference type="OrthoDB" id="9810365at2"/>
<dbReference type="Proteomes" id="UP000000756">
    <property type="component" value="Chromosome"/>
</dbReference>
<dbReference type="GO" id="GO:0005829">
    <property type="term" value="C:cytosol"/>
    <property type="evidence" value="ECO:0007669"/>
    <property type="project" value="TreeGrafter"/>
</dbReference>
<dbReference type="GO" id="GO:0002161">
    <property type="term" value="F:aminoacyl-tRNA deacylase activity"/>
    <property type="evidence" value="ECO:0007669"/>
    <property type="project" value="InterPro"/>
</dbReference>
<dbReference type="GO" id="GO:0005524">
    <property type="term" value="F:ATP binding"/>
    <property type="evidence" value="ECO:0007669"/>
    <property type="project" value="UniProtKB-UniRule"/>
</dbReference>
<dbReference type="GO" id="GO:0004822">
    <property type="term" value="F:isoleucine-tRNA ligase activity"/>
    <property type="evidence" value="ECO:0007669"/>
    <property type="project" value="UniProtKB-UniRule"/>
</dbReference>
<dbReference type="GO" id="GO:0000049">
    <property type="term" value="F:tRNA binding"/>
    <property type="evidence" value="ECO:0007669"/>
    <property type="project" value="InterPro"/>
</dbReference>
<dbReference type="GO" id="GO:0008270">
    <property type="term" value="F:zinc ion binding"/>
    <property type="evidence" value="ECO:0007669"/>
    <property type="project" value="UniProtKB-UniRule"/>
</dbReference>
<dbReference type="GO" id="GO:0006428">
    <property type="term" value="P:isoleucyl-tRNA aminoacylation"/>
    <property type="evidence" value="ECO:0007669"/>
    <property type="project" value="UniProtKB-UniRule"/>
</dbReference>
<dbReference type="CDD" id="cd07960">
    <property type="entry name" value="Anticodon_Ia_Ile_BEm"/>
    <property type="match status" value="1"/>
</dbReference>
<dbReference type="CDD" id="cd00818">
    <property type="entry name" value="IleRS_core"/>
    <property type="match status" value="1"/>
</dbReference>
<dbReference type="FunFam" id="1.10.730.20:FF:000001">
    <property type="entry name" value="Isoleucine--tRNA ligase"/>
    <property type="match status" value="1"/>
</dbReference>
<dbReference type="FunFam" id="3.40.50.620:FF:000042">
    <property type="entry name" value="Isoleucine--tRNA ligase"/>
    <property type="match status" value="1"/>
</dbReference>
<dbReference type="FunFam" id="3.40.50.620:FF:000048">
    <property type="entry name" value="Isoleucine--tRNA ligase"/>
    <property type="match status" value="1"/>
</dbReference>
<dbReference type="Gene3D" id="1.10.730.20">
    <property type="match status" value="1"/>
</dbReference>
<dbReference type="Gene3D" id="3.40.50.620">
    <property type="entry name" value="HUPs"/>
    <property type="match status" value="2"/>
</dbReference>
<dbReference type="Gene3D" id="3.90.740.10">
    <property type="entry name" value="Valyl/Leucyl/Isoleucyl-tRNA synthetase, editing domain"/>
    <property type="match status" value="1"/>
</dbReference>
<dbReference type="HAMAP" id="MF_02002">
    <property type="entry name" value="Ile_tRNA_synth_type1"/>
    <property type="match status" value="1"/>
</dbReference>
<dbReference type="InterPro" id="IPR001412">
    <property type="entry name" value="aa-tRNA-synth_I_CS"/>
</dbReference>
<dbReference type="InterPro" id="IPR002300">
    <property type="entry name" value="aa-tRNA-synth_Ia"/>
</dbReference>
<dbReference type="InterPro" id="IPR033708">
    <property type="entry name" value="Anticodon_Ile_BEm"/>
</dbReference>
<dbReference type="InterPro" id="IPR002301">
    <property type="entry name" value="Ile-tRNA-ligase"/>
</dbReference>
<dbReference type="InterPro" id="IPR023585">
    <property type="entry name" value="Ile-tRNA-ligase_type1"/>
</dbReference>
<dbReference type="InterPro" id="IPR050081">
    <property type="entry name" value="Ile-tRNA_ligase"/>
</dbReference>
<dbReference type="InterPro" id="IPR013155">
    <property type="entry name" value="M/V/L/I-tRNA-synth_anticd-bd"/>
</dbReference>
<dbReference type="InterPro" id="IPR014729">
    <property type="entry name" value="Rossmann-like_a/b/a_fold"/>
</dbReference>
<dbReference type="InterPro" id="IPR009080">
    <property type="entry name" value="tRNAsynth_Ia_anticodon-bd"/>
</dbReference>
<dbReference type="InterPro" id="IPR009008">
    <property type="entry name" value="Val/Leu/Ile-tRNA-synth_edit"/>
</dbReference>
<dbReference type="InterPro" id="IPR010663">
    <property type="entry name" value="Znf_FPG/IleRS"/>
</dbReference>
<dbReference type="NCBIfam" id="TIGR00392">
    <property type="entry name" value="ileS"/>
    <property type="match status" value="1"/>
</dbReference>
<dbReference type="PANTHER" id="PTHR42765:SF1">
    <property type="entry name" value="ISOLEUCINE--TRNA LIGASE, MITOCHONDRIAL"/>
    <property type="match status" value="1"/>
</dbReference>
<dbReference type="PANTHER" id="PTHR42765">
    <property type="entry name" value="SOLEUCYL-TRNA SYNTHETASE"/>
    <property type="match status" value="1"/>
</dbReference>
<dbReference type="Pfam" id="PF08264">
    <property type="entry name" value="Anticodon_1"/>
    <property type="match status" value="1"/>
</dbReference>
<dbReference type="Pfam" id="PF00133">
    <property type="entry name" value="tRNA-synt_1"/>
    <property type="match status" value="1"/>
</dbReference>
<dbReference type="Pfam" id="PF06827">
    <property type="entry name" value="zf-FPG_IleRS"/>
    <property type="match status" value="1"/>
</dbReference>
<dbReference type="PRINTS" id="PR00984">
    <property type="entry name" value="TRNASYNTHILE"/>
</dbReference>
<dbReference type="SUPFAM" id="SSF47323">
    <property type="entry name" value="Anticodon-binding domain of a subclass of class I aminoacyl-tRNA synthetases"/>
    <property type="match status" value="1"/>
</dbReference>
<dbReference type="SUPFAM" id="SSF52374">
    <property type="entry name" value="Nucleotidylyl transferase"/>
    <property type="match status" value="1"/>
</dbReference>
<dbReference type="SUPFAM" id="SSF50677">
    <property type="entry name" value="ValRS/IleRS/LeuRS editing domain"/>
    <property type="match status" value="1"/>
</dbReference>
<dbReference type="PROSITE" id="PS00178">
    <property type="entry name" value="AA_TRNA_LIGASE_I"/>
    <property type="match status" value="1"/>
</dbReference>
<organism>
    <name type="scientific">Aeromonas hydrophila subsp. hydrophila (strain ATCC 7966 / DSM 30187 / BCRC 13018 / CCUG 14551 / JCM 1027 / KCTC 2358 / NCIMB 9240 / NCTC 8049)</name>
    <dbReference type="NCBI Taxonomy" id="380703"/>
    <lineage>
        <taxon>Bacteria</taxon>
        <taxon>Pseudomonadati</taxon>
        <taxon>Pseudomonadota</taxon>
        <taxon>Gammaproteobacteria</taxon>
        <taxon>Aeromonadales</taxon>
        <taxon>Aeromonadaceae</taxon>
        <taxon>Aeromonas</taxon>
    </lineage>
</organism>
<gene>
    <name evidence="1" type="primary">ileS</name>
    <name type="ordered locus">AHA_0682</name>
</gene>
<feature type="chain" id="PRO_1000022037" description="Isoleucine--tRNA ligase">
    <location>
        <begin position="1"/>
        <end position="953"/>
    </location>
</feature>
<feature type="short sequence motif" description="'HIGH' region">
    <location>
        <begin position="58"/>
        <end position="68"/>
    </location>
</feature>
<feature type="short sequence motif" description="'KMSKS' region">
    <location>
        <begin position="618"/>
        <end position="622"/>
    </location>
</feature>
<feature type="binding site" evidence="1">
    <location>
        <position position="577"/>
    </location>
    <ligand>
        <name>L-isoleucyl-5'-AMP</name>
        <dbReference type="ChEBI" id="CHEBI:178002"/>
    </ligand>
</feature>
<feature type="binding site" evidence="1">
    <location>
        <position position="621"/>
    </location>
    <ligand>
        <name>ATP</name>
        <dbReference type="ChEBI" id="CHEBI:30616"/>
    </ligand>
</feature>
<feature type="binding site" evidence="1">
    <location>
        <position position="916"/>
    </location>
    <ligand>
        <name>Zn(2+)</name>
        <dbReference type="ChEBI" id="CHEBI:29105"/>
    </ligand>
</feature>
<feature type="binding site" evidence="1">
    <location>
        <position position="919"/>
    </location>
    <ligand>
        <name>Zn(2+)</name>
        <dbReference type="ChEBI" id="CHEBI:29105"/>
    </ligand>
</feature>
<feature type="binding site" evidence="1">
    <location>
        <position position="936"/>
    </location>
    <ligand>
        <name>Zn(2+)</name>
        <dbReference type="ChEBI" id="CHEBI:29105"/>
    </ligand>
</feature>
<feature type="binding site" evidence="1">
    <location>
        <position position="939"/>
    </location>
    <ligand>
        <name>Zn(2+)</name>
        <dbReference type="ChEBI" id="CHEBI:29105"/>
    </ligand>
</feature>
<proteinExistence type="inferred from homology"/>
<keyword id="KW-0030">Aminoacyl-tRNA synthetase</keyword>
<keyword id="KW-0067">ATP-binding</keyword>
<keyword id="KW-0963">Cytoplasm</keyword>
<keyword id="KW-0436">Ligase</keyword>
<keyword id="KW-0479">Metal-binding</keyword>
<keyword id="KW-0547">Nucleotide-binding</keyword>
<keyword id="KW-0648">Protein biosynthesis</keyword>
<keyword id="KW-1185">Reference proteome</keyword>
<keyword id="KW-0862">Zinc</keyword>
<accession>A0KG39</accession>
<protein>
    <recommendedName>
        <fullName evidence="1">Isoleucine--tRNA ligase</fullName>
        <ecNumber evidence="1">6.1.1.5</ecNumber>
    </recommendedName>
    <alternativeName>
        <fullName evidence="1">Isoleucyl-tRNA synthetase</fullName>
        <shortName evidence="1">IleRS</shortName>
    </alternativeName>
</protein>
<reference key="1">
    <citation type="journal article" date="2006" name="J. Bacteriol.">
        <title>Genome sequence of Aeromonas hydrophila ATCC 7966T: jack of all trades.</title>
        <authorList>
            <person name="Seshadri R."/>
            <person name="Joseph S.W."/>
            <person name="Chopra A.K."/>
            <person name="Sha J."/>
            <person name="Shaw J."/>
            <person name="Graf J."/>
            <person name="Haft D.H."/>
            <person name="Wu M."/>
            <person name="Ren Q."/>
            <person name="Rosovitz M.J."/>
            <person name="Madupu R."/>
            <person name="Tallon L."/>
            <person name="Kim M."/>
            <person name="Jin S."/>
            <person name="Vuong H."/>
            <person name="Stine O.C."/>
            <person name="Ali A."/>
            <person name="Horneman A.J."/>
            <person name="Heidelberg J.F."/>
        </authorList>
    </citation>
    <scope>NUCLEOTIDE SEQUENCE [LARGE SCALE GENOMIC DNA]</scope>
    <source>
        <strain>ATCC 7966 / DSM 30187 / BCRC 13018 / CCUG 14551 / JCM 1027 / KCTC 2358 / NCIMB 9240 / NCTC 8049</strain>
    </source>
</reference>
<comment type="function">
    <text evidence="1">Catalyzes the attachment of isoleucine to tRNA(Ile). As IleRS can inadvertently accommodate and process structurally similar amino acids such as valine, to avoid such errors it has two additional distinct tRNA(Ile)-dependent editing activities. One activity is designated as 'pretransfer' editing and involves the hydrolysis of activated Val-AMP. The other activity is designated 'posttransfer' editing and involves deacylation of mischarged Val-tRNA(Ile).</text>
</comment>
<comment type="catalytic activity">
    <reaction evidence="1">
        <text>tRNA(Ile) + L-isoleucine + ATP = L-isoleucyl-tRNA(Ile) + AMP + diphosphate</text>
        <dbReference type="Rhea" id="RHEA:11060"/>
        <dbReference type="Rhea" id="RHEA-COMP:9666"/>
        <dbReference type="Rhea" id="RHEA-COMP:9695"/>
        <dbReference type="ChEBI" id="CHEBI:30616"/>
        <dbReference type="ChEBI" id="CHEBI:33019"/>
        <dbReference type="ChEBI" id="CHEBI:58045"/>
        <dbReference type="ChEBI" id="CHEBI:78442"/>
        <dbReference type="ChEBI" id="CHEBI:78528"/>
        <dbReference type="ChEBI" id="CHEBI:456215"/>
        <dbReference type="EC" id="6.1.1.5"/>
    </reaction>
</comment>
<comment type="cofactor">
    <cofactor evidence="1">
        <name>Zn(2+)</name>
        <dbReference type="ChEBI" id="CHEBI:29105"/>
    </cofactor>
    <text evidence="1">Binds 1 zinc ion per subunit.</text>
</comment>
<comment type="subunit">
    <text evidence="1">Monomer.</text>
</comment>
<comment type="subcellular location">
    <subcellularLocation>
        <location evidence="1">Cytoplasm</location>
    </subcellularLocation>
</comment>
<comment type="domain">
    <text evidence="1">IleRS has two distinct active sites: one for aminoacylation and one for editing. The misactivated valine is translocated from the active site to the editing site, which sterically excludes the correctly activated isoleucine. The single editing site contains two valyl binding pockets, one specific for each substrate (Val-AMP or Val-tRNA(Ile)).</text>
</comment>
<comment type="similarity">
    <text evidence="1">Belongs to the class-I aminoacyl-tRNA synthetase family. IleS type 1 subfamily.</text>
</comment>
<evidence type="ECO:0000255" key="1">
    <source>
        <dbReference type="HAMAP-Rule" id="MF_02002"/>
    </source>
</evidence>
<sequence>MSDYKHTLNLPETEFPMRGDLAKREPNMLKRWYDQDLYGAIRRAKAGKPSFILHDGPPYANGSIHIGHSVNKILKDIIIKSKGLSGFDSPYVPGWDCHGLPIELKVEGMVGKPGEKVSAAEFRAECRKYAKTQIEAQKTDFIRLGVLGDWEHPYLTMDFGTEANIIRSMAKIVENGHLHKGSKPVHWCTDCGSALAEAEVEYYDKNSPSIDVRFKAVDEAGVAAKFDCAEGHTGKGPISAVIWTTTPWTLPANRGIAMHADLDYALVQVEGEHPERLILAAELVKDVMDRAGIEQFHNLGYAKGAALELLRFNHPFYSFDVPVVLGDHVTLDAGTGAVHTAPGHGQEDFVVGQKYGLEVANPVGSNGVYLPDTELFAGQHVFKANASVVEVLTERGALLHHKVFNHSYPHCWRHKTPIIFRATPQWFISMEQKGLRQRALEEIERIEQDGIKQHGQSGWVPAWGKNRIQAMVENRPDWCISRQRTWGVPISLFVHKETQELHPESVRLMHEVAKRVEQSGIQAWWDLDKAELLGSDADLYDKVPDTLDVWFDSGSTHSSVVDARPEFNGNPADMYLEGSDQHRGWFMSSLMIGVAMKDKAPYNQVLTHGFTVDGQGRKMSKSIGNVVSPQDVMNKLGADILRLWVASTDYTGEMTVSDEILKRSADAYRRIRNTARFLLANLNGFNPATDMVAPADMVVVDRWAVGRAKAVQAEIMAAFDEYNFHGVTQKLMQFCSIEMGSFYLDVIKDRQYTAKADSLARRSCQTALYHIAEAMVRWMAPIMSFTADEIWALLPGERGEFVFTEEWYDGLFGLEAGETLNDDFWAEILTVRGEVNKALEVARGEKRIGGSLQAELTLFAKPALAARLNALADELRFVLLTSKAKVVSVDAAPADAVATERDDLWLSVAQSAAAKCDRCWHHVEDVGTIAGHEEICGRCVTNVEGDGETRQFA</sequence>
<name>SYI_AERHH</name>